<dbReference type="EC" id="3.1.21.10" evidence="1"/>
<dbReference type="EMBL" id="CP000031">
    <property type="protein sequence ID" value="AAV96351.1"/>
    <property type="molecule type" value="Genomic_DNA"/>
</dbReference>
<dbReference type="RefSeq" id="WP_011048807.1">
    <property type="nucleotide sequence ID" value="NC_003911.12"/>
</dbReference>
<dbReference type="SMR" id="Q5LNT6"/>
<dbReference type="STRING" id="246200.SPO3117"/>
<dbReference type="PaxDb" id="246200-SPO3117"/>
<dbReference type="KEGG" id="sil:SPO3117"/>
<dbReference type="eggNOG" id="COG0817">
    <property type="taxonomic scope" value="Bacteria"/>
</dbReference>
<dbReference type="HOGENOM" id="CLU_091257_1_0_5"/>
<dbReference type="OrthoDB" id="9805499at2"/>
<dbReference type="Proteomes" id="UP000001023">
    <property type="component" value="Chromosome"/>
</dbReference>
<dbReference type="GO" id="GO:0005737">
    <property type="term" value="C:cytoplasm"/>
    <property type="evidence" value="ECO:0007669"/>
    <property type="project" value="UniProtKB-SubCell"/>
</dbReference>
<dbReference type="GO" id="GO:0048476">
    <property type="term" value="C:Holliday junction resolvase complex"/>
    <property type="evidence" value="ECO:0007669"/>
    <property type="project" value="UniProtKB-UniRule"/>
</dbReference>
<dbReference type="GO" id="GO:0008821">
    <property type="term" value="F:crossover junction DNA endonuclease activity"/>
    <property type="evidence" value="ECO:0007669"/>
    <property type="project" value="UniProtKB-UniRule"/>
</dbReference>
<dbReference type="GO" id="GO:0003677">
    <property type="term" value="F:DNA binding"/>
    <property type="evidence" value="ECO:0007669"/>
    <property type="project" value="UniProtKB-KW"/>
</dbReference>
<dbReference type="GO" id="GO:0000287">
    <property type="term" value="F:magnesium ion binding"/>
    <property type="evidence" value="ECO:0007669"/>
    <property type="project" value="UniProtKB-UniRule"/>
</dbReference>
<dbReference type="GO" id="GO:0006310">
    <property type="term" value="P:DNA recombination"/>
    <property type="evidence" value="ECO:0007669"/>
    <property type="project" value="UniProtKB-UniRule"/>
</dbReference>
<dbReference type="GO" id="GO:0006281">
    <property type="term" value="P:DNA repair"/>
    <property type="evidence" value="ECO:0007669"/>
    <property type="project" value="UniProtKB-UniRule"/>
</dbReference>
<dbReference type="CDD" id="cd16962">
    <property type="entry name" value="RuvC"/>
    <property type="match status" value="1"/>
</dbReference>
<dbReference type="FunFam" id="3.30.420.10:FF:000002">
    <property type="entry name" value="Crossover junction endodeoxyribonuclease RuvC"/>
    <property type="match status" value="1"/>
</dbReference>
<dbReference type="Gene3D" id="3.30.420.10">
    <property type="entry name" value="Ribonuclease H-like superfamily/Ribonuclease H"/>
    <property type="match status" value="1"/>
</dbReference>
<dbReference type="HAMAP" id="MF_00034">
    <property type="entry name" value="RuvC"/>
    <property type="match status" value="1"/>
</dbReference>
<dbReference type="InterPro" id="IPR012337">
    <property type="entry name" value="RNaseH-like_sf"/>
</dbReference>
<dbReference type="InterPro" id="IPR036397">
    <property type="entry name" value="RNaseH_sf"/>
</dbReference>
<dbReference type="InterPro" id="IPR020563">
    <property type="entry name" value="X-over_junc_endoDNase_Mg_BS"/>
</dbReference>
<dbReference type="InterPro" id="IPR002176">
    <property type="entry name" value="X-over_junc_endoDNase_RuvC"/>
</dbReference>
<dbReference type="NCBIfam" id="TIGR00228">
    <property type="entry name" value="ruvC"/>
    <property type="match status" value="1"/>
</dbReference>
<dbReference type="PANTHER" id="PTHR30194">
    <property type="entry name" value="CROSSOVER JUNCTION ENDODEOXYRIBONUCLEASE RUVC"/>
    <property type="match status" value="1"/>
</dbReference>
<dbReference type="PANTHER" id="PTHR30194:SF3">
    <property type="entry name" value="CROSSOVER JUNCTION ENDODEOXYRIBONUCLEASE RUVC"/>
    <property type="match status" value="1"/>
</dbReference>
<dbReference type="Pfam" id="PF02075">
    <property type="entry name" value="RuvC"/>
    <property type="match status" value="1"/>
</dbReference>
<dbReference type="PRINTS" id="PR00696">
    <property type="entry name" value="RSOLVASERUVC"/>
</dbReference>
<dbReference type="SUPFAM" id="SSF53098">
    <property type="entry name" value="Ribonuclease H-like"/>
    <property type="match status" value="1"/>
</dbReference>
<dbReference type="PROSITE" id="PS01321">
    <property type="entry name" value="RUVC"/>
    <property type="match status" value="1"/>
</dbReference>
<comment type="function">
    <text evidence="1">The RuvA-RuvB-RuvC complex processes Holliday junction (HJ) DNA during genetic recombination and DNA repair. Endonuclease that resolves HJ intermediates. Cleaves cruciform DNA by making single-stranded nicks across the HJ at symmetrical positions within the homologous arms, yielding a 5'-phosphate and a 3'-hydroxyl group; requires a central core of homology in the junction. The consensus cleavage sequence is 5'-(A/T)TT(C/G)-3'. Cleavage occurs on the 3'-side of the TT dinucleotide at the point of strand exchange. HJ branch migration catalyzed by RuvA-RuvB allows RuvC to scan DNA until it finds its consensus sequence, where it cleaves and resolves the cruciform DNA.</text>
</comment>
<comment type="catalytic activity">
    <reaction evidence="1">
        <text>Endonucleolytic cleavage at a junction such as a reciprocal single-stranded crossover between two homologous DNA duplexes (Holliday junction).</text>
        <dbReference type="EC" id="3.1.21.10"/>
    </reaction>
</comment>
<comment type="cofactor">
    <cofactor evidence="1">
        <name>Mg(2+)</name>
        <dbReference type="ChEBI" id="CHEBI:18420"/>
    </cofactor>
    <text evidence="1">Binds 2 Mg(2+) ion per subunit.</text>
</comment>
<comment type="subunit">
    <text evidence="1">Homodimer which binds Holliday junction (HJ) DNA. The HJ becomes 2-fold symmetrical on binding to RuvC with unstacked arms; it has a different conformation from HJ DNA in complex with RuvA. In the full resolvosome a probable DNA-RuvA(4)-RuvB(12)-RuvC(2) complex forms which resolves the HJ.</text>
</comment>
<comment type="subcellular location">
    <subcellularLocation>
        <location evidence="1">Cytoplasm</location>
    </subcellularLocation>
</comment>
<comment type="similarity">
    <text evidence="1">Belongs to the RuvC family.</text>
</comment>
<gene>
    <name evidence="1" type="primary">ruvC</name>
    <name type="ordered locus">SPO3117</name>
</gene>
<organism>
    <name type="scientific">Ruegeria pomeroyi (strain ATCC 700808 / DSM 15171 / DSS-3)</name>
    <name type="common">Silicibacter pomeroyi</name>
    <dbReference type="NCBI Taxonomy" id="246200"/>
    <lineage>
        <taxon>Bacteria</taxon>
        <taxon>Pseudomonadati</taxon>
        <taxon>Pseudomonadota</taxon>
        <taxon>Alphaproteobacteria</taxon>
        <taxon>Rhodobacterales</taxon>
        <taxon>Roseobacteraceae</taxon>
        <taxon>Ruegeria</taxon>
    </lineage>
</organism>
<name>RUVC_RUEPO</name>
<evidence type="ECO:0000255" key="1">
    <source>
        <dbReference type="HAMAP-Rule" id="MF_00034"/>
    </source>
</evidence>
<proteinExistence type="inferred from homology"/>
<reference key="1">
    <citation type="journal article" date="2004" name="Nature">
        <title>Genome sequence of Silicibacter pomeroyi reveals adaptations to the marine environment.</title>
        <authorList>
            <person name="Moran M.A."/>
            <person name="Buchan A."/>
            <person name="Gonzalez J.M."/>
            <person name="Heidelberg J.F."/>
            <person name="Whitman W.B."/>
            <person name="Kiene R.P."/>
            <person name="Henriksen J.R."/>
            <person name="King G.M."/>
            <person name="Belas R."/>
            <person name="Fuqua C."/>
            <person name="Brinkac L.M."/>
            <person name="Lewis M."/>
            <person name="Johri S."/>
            <person name="Weaver B."/>
            <person name="Pai G."/>
            <person name="Eisen J.A."/>
            <person name="Rahe E."/>
            <person name="Sheldon W.M."/>
            <person name="Ye W."/>
            <person name="Miller T.R."/>
            <person name="Carlton J."/>
            <person name="Rasko D.A."/>
            <person name="Paulsen I.T."/>
            <person name="Ren Q."/>
            <person name="Daugherty S.C."/>
            <person name="DeBoy R.T."/>
            <person name="Dodson R.J."/>
            <person name="Durkin A.S."/>
            <person name="Madupu R."/>
            <person name="Nelson W.C."/>
            <person name="Sullivan S.A."/>
            <person name="Rosovitz M.J."/>
            <person name="Haft D.H."/>
            <person name="Selengut J."/>
            <person name="Ward N."/>
        </authorList>
    </citation>
    <scope>NUCLEOTIDE SEQUENCE [LARGE SCALE GENOMIC DNA]</scope>
    <source>
        <strain>ATCC 700808 / DSM 15171 / DSS-3</strain>
    </source>
</reference>
<reference key="2">
    <citation type="journal article" date="2014" name="Stand. Genomic Sci.">
        <title>An updated genome annotation for the model marine bacterium Ruegeria pomeroyi DSS-3.</title>
        <authorList>
            <person name="Rivers A.R."/>
            <person name="Smith C.B."/>
            <person name="Moran M.A."/>
        </authorList>
    </citation>
    <scope>GENOME REANNOTATION</scope>
    <source>
        <strain>ATCC 700808 / DSM 15171 / DSS-3</strain>
    </source>
</reference>
<feature type="chain" id="PRO_0000225179" description="Crossover junction endodeoxyribonuclease RuvC">
    <location>
        <begin position="1"/>
        <end position="165"/>
    </location>
</feature>
<feature type="active site" evidence="1">
    <location>
        <position position="7"/>
    </location>
</feature>
<feature type="active site" evidence="1">
    <location>
        <position position="66"/>
    </location>
</feature>
<feature type="active site" evidence="1">
    <location>
        <position position="138"/>
    </location>
</feature>
<feature type="binding site" evidence="1">
    <location>
        <position position="7"/>
    </location>
    <ligand>
        <name>Mg(2+)</name>
        <dbReference type="ChEBI" id="CHEBI:18420"/>
        <label>1</label>
    </ligand>
</feature>
<feature type="binding site" evidence="1">
    <location>
        <position position="66"/>
    </location>
    <ligand>
        <name>Mg(2+)</name>
        <dbReference type="ChEBI" id="CHEBI:18420"/>
        <label>2</label>
    </ligand>
</feature>
<feature type="binding site" evidence="1">
    <location>
        <position position="138"/>
    </location>
    <ligand>
        <name>Mg(2+)</name>
        <dbReference type="ChEBI" id="CHEBI:18420"/>
        <label>1</label>
    </ligand>
</feature>
<accession>Q5LNT6</accession>
<sequence length="165" mass="17593">MRILGIDPGLRTLGWGVIEQRGSRLSHVANGLCHSDGDDLGERLLSLHNQIVEVIEEYRPDQAAIEQTFVNKDGAGTLKLGQARGVALLTLAQAGLPVGEYAPNRVKKTVVGVGHAEKEQVIHMVKLQLPGCLPKGADAADALAIAICHAYYGSAQALSQREVRA</sequence>
<protein>
    <recommendedName>
        <fullName evidence="1">Crossover junction endodeoxyribonuclease RuvC</fullName>
        <ecNumber evidence="1">3.1.21.10</ecNumber>
    </recommendedName>
    <alternativeName>
        <fullName evidence="1">Holliday junction nuclease RuvC</fullName>
    </alternativeName>
    <alternativeName>
        <fullName evidence="1">Holliday junction resolvase RuvC</fullName>
    </alternativeName>
</protein>
<keyword id="KW-0963">Cytoplasm</keyword>
<keyword id="KW-0227">DNA damage</keyword>
<keyword id="KW-0233">DNA recombination</keyword>
<keyword id="KW-0234">DNA repair</keyword>
<keyword id="KW-0238">DNA-binding</keyword>
<keyword id="KW-0255">Endonuclease</keyword>
<keyword id="KW-0378">Hydrolase</keyword>
<keyword id="KW-0460">Magnesium</keyword>
<keyword id="KW-0479">Metal-binding</keyword>
<keyword id="KW-0540">Nuclease</keyword>
<keyword id="KW-1185">Reference proteome</keyword>